<sequence length="234" mass="26619">MRLVQLSRHSIAFPSPEGALREPNGLLALGGDLSPARLLMAYQRGIFPWFSPGDPILWWSPDPRAVLWPESLHISRSMKRFHKRSPYRVTMNYAFGQVIEGCASDREEGTWITRGVVEAYHRLHELGHAHSIEVWREDELVGGMYGVAQGTLFCGESMFSRMENASKTALLVFCEEFIGHGGKLIDCQVLNDHTASLGACEIPRRDYLNYLNQMRLGRLPNNFWVPRCLFSPQE</sequence>
<gene>
    <name evidence="1" type="primary">aat</name>
    <name type="ordered locus">ECUMN_1080</name>
</gene>
<reference key="1">
    <citation type="journal article" date="2009" name="PLoS Genet.">
        <title>Organised genome dynamics in the Escherichia coli species results in highly diverse adaptive paths.</title>
        <authorList>
            <person name="Touchon M."/>
            <person name="Hoede C."/>
            <person name="Tenaillon O."/>
            <person name="Barbe V."/>
            <person name="Baeriswyl S."/>
            <person name="Bidet P."/>
            <person name="Bingen E."/>
            <person name="Bonacorsi S."/>
            <person name="Bouchier C."/>
            <person name="Bouvet O."/>
            <person name="Calteau A."/>
            <person name="Chiapello H."/>
            <person name="Clermont O."/>
            <person name="Cruveiller S."/>
            <person name="Danchin A."/>
            <person name="Diard M."/>
            <person name="Dossat C."/>
            <person name="Karoui M.E."/>
            <person name="Frapy E."/>
            <person name="Garry L."/>
            <person name="Ghigo J.M."/>
            <person name="Gilles A.M."/>
            <person name="Johnson J."/>
            <person name="Le Bouguenec C."/>
            <person name="Lescat M."/>
            <person name="Mangenot S."/>
            <person name="Martinez-Jehanne V."/>
            <person name="Matic I."/>
            <person name="Nassif X."/>
            <person name="Oztas S."/>
            <person name="Petit M.A."/>
            <person name="Pichon C."/>
            <person name="Rouy Z."/>
            <person name="Ruf C.S."/>
            <person name="Schneider D."/>
            <person name="Tourret J."/>
            <person name="Vacherie B."/>
            <person name="Vallenet D."/>
            <person name="Medigue C."/>
            <person name="Rocha E.P.C."/>
            <person name="Denamur E."/>
        </authorList>
    </citation>
    <scope>NUCLEOTIDE SEQUENCE [LARGE SCALE GENOMIC DNA]</scope>
    <source>
        <strain>UMN026 / ExPEC</strain>
    </source>
</reference>
<organism>
    <name type="scientific">Escherichia coli O17:K52:H18 (strain UMN026 / ExPEC)</name>
    <dbReference type="NCBI Taxonomy" id="585056"/>
    <lineage>
        <taxon>Bacteria</taxon>
        <taxon>Pseudomonadati</taxon>
        <taxon>Pseudomonadota</taxon>
        <taxon>Gammaproteobacteria</taxon>
        <taxon>Enterobacterales</taxon>
        <taxon>Enterobacteriaceae</taxon>
        <taxon>Escherichia</taxon>
    </lineage>
</organism>
<proteinExistence type="inferred from homology"/>
<dbReference type="EC" id="2.3.2.6" evidence="1"/>
<dbReference type="EMBL" id="CU928163">
    <property type="protein sequence ID" value="CAR12289.1"/>
    <property type="molecule type" value="Genomic_DNA"/>
</dbReference>
<dbReference type="RefSeq" id="WP_001241678.1">
    <property type="nucleotide sequence ID" value="NC_011751.1"/>
</dbReference>
<dbReference type="RefSeq" id="YP_002411833.1">
    <property type="nucleotide sequence ID" value="NC_011751.1"/>
</dbReference>
<dbReference type="SMR" id="B7NAN6"/>
<dbReference type="STRING" id="585056.ECUMN_1080"/>
<dbReference type="GeneID" id="75206174"/>
<dbReference type="KEGG" id="eum:ECUMN_1080"/>
<dbReference type="PATRIC" id="fig|585056.7.peg.1272"/>
<dbReference type="HOGENOM" id="CLU_075045_0_0_6"/>
<dbReference type="Proteomes" id="UP000007097">
    <property type="component" value="Chromosome"/>
</dbReference>
<dbReference type="GO" id="GO:0005737">
    <property type="term" value="C:cytoplasm"/>
    <property type="evidence" value="ECO:0007669"/>
    <property type="project" value="UniProtKB-SubCell"/>
</dbReference>
<dbReference type="GO" id="GO:0008914">
    <property type="term" value="F:leucyl-tRNA--protein transferase activity"/>
    <property type="evidence" value="ECO:0007669"/>
    <property type="project" value="UniProtKB-UniRule"/>
</dbReference>
<dbReference type="GO" id="GO:0030163">
    <property type="term" value="P:protein catabolic process"/>
    <property type="evidence" value="ECO:0007669"/>
    <property type="project" value="UniProtKB-UniRule"/>
</dbReference>
<dbReference type="FunFam" id="3.30.70.3550:FF:000001">
    <property type="entry name" value="Leucyl/phenylalanyl-tRNA--protein transferase"/>
    <property type="match status" value="1"/>
</dbReference>
<dbReference type="FunFam" id="3.40.630.70:FF:000001">
    <property type="entry name" value="Leucyl/phenylalanyl-tRNA--protein transferase"/>
    <property type="match status" value="1"/>
</dbReference>
<dbReference type="Gene3D" id="3.40.630.70">
    <property type="entry name" value="Leucyl/phenylalanyl-tRNA-protein transferase, C-terminal domain"/>
    <property type="match status" value="1"/>
</dbReference>
<dbReference type="Gene3D" id="3.30.70.3550">
    <property type="entry name" value="Leucyl/phenylalanyl-tRNA-protein transferase, N-terminal domain"/>
    <property type="match status" value="1"/>
</dbReference>
<dbReference type="HAMAP" id="MF_00688">
    <property type="entry name" value="Leu_Phe_trans"/>
    <property type="match status" value="1"/>
</dbReference>
<dbReference type="InterPro" id="IPR016181">
    <property type="entry name" value="Acyl_CoA_acyltransferase"/>
</dbReference>
<dbReference type="InterPro" id="IPR004616">
    <property type="entry name" value="Leu/Phe-tRNA_Trfase"/>
</dbReference>
<dbReference type="InterPro" id="IPR042203">
    <property type="entry name" value="Leu/Phe-tRNA_Trfase_C"/>
</dbReference>
<dbReference type="InterPro" id="IPR042221">
    <property type="entry name" value="Leu/Phe-tRNA_Trfase_N"/>
</dbReference>
<dbReference type="NCBIfam" id="TIGR00667">
    <property type="entry name" value="aat"/>
    <property type="match status" value="1"/>
</dbReference>
<dbReference type="PANTHER" id="PTHR30098">
    <property type="entry name" value="LEUCYL/PHENYLALANYL-TRNA--PROTEIN TRANSFERASE"/>
    <property type="match status" value="1"/>
</dbReference>
<dbReference type="PANTHER" id="PTHR30098:SF2">
    <property type="entry name" value="LEUCYL_PHENYLALANYL-TRNA--PROTEIN TRANSFERASE"/>
    <property type="match status" value="1"/>
</dbReference>
<dbReference type="Pfam" id="PF03588">
    <property type="entry name" value="Leu_Phe_trans"/>
    <property type="match status" value="1"/>
</dbReference>
<dbReference type="SUPFAM" id="SSF55729">
    <property type="entry name" value="Acyl-CoA N-acyltransferases (Nat)"/>
    <property type="match status" value="1"/>
</dbReference>
<comment type="function">
    <text evidence="1">Functions in the N-end rule pathway of protein degradation where it conjugates Leu, Phe and, less efficiently, Met from aminoacyl-tRNAs to the N-termini of proteins containing an N-terminal arginine or lysine.</text>
</comment>
<comment type="catalytic activity">
    <reaction evidence="1">
        <text>N-terminal L-lysyl-[protein] + L-leucyl-tRNA(Leu) = N-terminal L-leucyl-L-lysyl-[protein] + tRNA(Leu) + H(+)</text>
        <dbReference type="Rhea" id="RHEA:12340"/>
        <dbReference type="Rhea" id="RHEA-COMP:9613"/>
        <dbReference type="Rhea" id="RHEA-COMP:9622"/>
        <dbReference type="Rhea" id="RHEA-COMP:12670"/>
        <dbReference type="Rhea" id="RHEA-COMP:12671"/>
        <dbReference type="ChEBI" id="CHEBI:15378"/>
        <dbReference type="ChEBI" id="CHEBI:65249"/>
        <dbReference type="ChEBI" id="CHEBI:78442"/>
        <dbReference type="ChEBI" id="CHEBI:78494"/>
        <dbReference type="ChEBI" id="CHEBI:133043"/>
        <dbReference type="EC" id="2.3.2.6"/>
    </reaction>
</comment>
<comment type="catalytic activity">
    <reaction evidence="1">
        <text>N-terminal L-arginyl-[protein] + L-leucyl-tRNA(Leu) = N-terminal L-leucyl-L-arginyl-[protein] + tRNA(Leu) + H(+)</text>
        <dbReference type="Rhea" id="RHEA:50416"/>
        <dbReference type="Rhea" id="RHEA-COMP:9613"/>
        <dbReference type="Rhea" id="RHEA-COMP:9622"/>
        <dbReference type="Rhea" id="RHEA-COMP:12672"/>
        <dbReference type="Rhea" id="RHEA-COMP:12673"/>
        <dbReference type="ChEBI" id="CHEBI:15378"/>
        <dbReference type="ChEBI" id="CHEBI:64719"/>
        <dbReference type="ChEBI" id="CHEBI:78442"/>
        <dbReference type="ChEBI" id="CHEBI:78494"/>
        <dbReference type="ChEBI" id="CHEBI:133044"/>
        <dbReference type="EC" id="2.3.2.6"/>
    </reaction>
</comment>
<comment type="catalytic activity">
    <reaction evidence="1">
        <text>L-phenylalanyl-tRNA(Phe) + an N-terminal L-alpha-aminoacyl-[protein] = an N-terminal L-phenylalanyl-L-alpha-aminoacyl-[protein] + tRNA(Phe)</text>
        <dbReference type="Rhea" id="RHEA:43632"/>
        <dbReference type="Rhea" id="RHEA-COMP:9668"/>
        <dbReference type="Rhea" id="RHEA-COMP:9699"/>
        <dbReference type="Rhea" id="RHEA-COMP:10636"/>
        <dbReference type="Rhea" id="RHEA-COMP:10637"/>
        <dbReference type="ChEBI" id="CHEBI:78442"/>
        <dbReference type="ChEBI" id="CHEBI:78531"/>
        <dbReference type="ChEBI" id="CHEBI:78597"/>
        <dbReference type="ChEBI" id="CHEBI:83561"/>
        <dbReference type="EC" id="2.3.2.6"/>
    </reaction>
</comment>
<comment type="subcellular location">
    <subcellularLocation>
        <location evidence="1">Cytoplasm</location>
    </subcellularLocation>
</comment>
<comment type="similarity">
    <text evidence="1">Belongs to the L/F-transferase family.</text>
</comment>
<name>LFTR_ECOLU</name>
<keyword id="KW-0012">Acyltransferase</keyword>
<keyword id="KW-0963">Cytoplasm</keyword>
<keyword id="KW-0808">Transferase</keyword>
<protein>
    <recommendedName>
        <fullName evidence="1">Leucyl/phenylalanyl-tRNA--protein transferase</fullName>
        <ecNumber evidence="1">2.3.2.6</ecNumber>
    </recommendedName>
    <alternativeName>
        <fullName evidence="1">L/F-transferase</fullName>
    </alternativeName>
    <alternativeName>
        <fullName evidence="1">Leucyltransferase</fullName>
    </alternativeName>
    <alternativeName>
        <fullName evidence="1">Phenyalanyltransferase</fullName>
    </alternativeName>
</protein>
<feature type="chain" id="PRO_1000131923" description="Leucyl/phenylalanyl-tRNA--protein transferase">
    <location>
        <begin position="1"/>
        <end position="234"/>
    </location>
</feature>
<evidence type="ECO:0000255" key="1">
    <source>
        <dbReference type="HAMAP-Rule" id="MF_00688"/>
    </source>
</evidence>
<accession>B7NAN6</accession>